<evidence type="ECO:0000255" key="1">
    <source>
        <dbReference type="HAMAP-Rule" id="MF_00381"/>
    </source>
</evidence>
<name>IHFB_PSEPG</name>
<proteinExistence type="inferred from homology"/>
<keyword id="KW-0233">DNA recombination</keyword>
<keyword id="KW-0238">DNA-binding</keyword>
<keyword id="KW-0804">Transcription</keyword>
<keyword id="KW-0805">Transcription regulation</keyword>
<keyword id="KW-0810">Translation regulation</keyword>
<organism>
    <name type="scientific">Pseudomonas putida (strain GB-1)</name>
    <dbReference type="NCBI Taxonomy" id="76869"/>
    <lineage>
        <taxon>Bacteria</taxon>
        <taxon>Pseudomonadati</taxon>
        <taxon>Pseudomonadota</taxon>
        <taxon>Gammaproteobacteria</taxon>
        <taxon>Pseudomonadales</taxon>
        <taxon>Pseudomonadaceae</taxon>
        <taxon>Pseudomonas</taxon>
    </lineage>
</organism>
<comment type="function">
    <text evidence="1">This protein is one of the two subunits of integration host factor, a specific DNA-binding protein that functions in genetic recombination as well as in transcriptional and translational control.</text>
</comment>
<comment type="subunit">
    <text evidence="1">Heterodimer of an alpha and a beta chain.</text>
</comment>
<comment type="similarity">
    <text evidence="1">Belongs to the bacterial histone-like protein family.</text>
</comment>
<reference key="1">
    <citation type="submission" date="2008-01" db="EMBL/GenBank/DDBJ databases">
        <title>Complete sequence of Pseudomonas putida GB-1.</title>
        <authorList>
            <consortium name="US DOE Joint Genome Institute"/>
            <person name="Copeland A."/>
            <person name="Lucas S."/>
            <person name="Lapidus A."/>
            <person name="Barry K."/>
            <person name="Glavina del Rio T."/>
            <person name="Dalin E."/>
            <person name="Tice H."/>
            <person name="Pitluck S."/>
            <person name="Bruce D."/>
            <person name="Goodwin L."/>
            <person name="Chertkov O."/>
            <person name="Brettin T."/>
            <person name="Detter J.C."/>
            <person name="Han C."/>
            <person name="Kuske C.R."/>
            <person name="Schmutz J."/>
            <person name="Larimer F."/>
            <person name="Land M."/>
            <person name="Hauser L."/>
            <person name="Kyrpides N."/>
            <person name="Kim E."/>
            <person name="McCarthy J.K."/>
            <person name="Richardson P."/>
        </authorList>
    </citation>
    <scope>NUCLEOTIDE SEQUENCE [LARGE SCALE GENOMIC DNA]</scope>
    <source>
        <strain>GB-1</strain>
    </source>
</reference>
<sequence length="98" mass="11028">MTKSELIERIVTHQGLLSSKDVELAIKTMLEQMSQCLATGDRIEIRGFGSFSLHYRAPRVGRNPKTGQSVSLEGKFVPHFKPGKELRDRVNEEDEAEA</sequence>
<gene>
    <name evidence="1" type="primary">ihfB</name>
    <name evidence="1" type="synonym">himD</name>
    <name type="ordered locus">PputGB1_1365</name>
</gene>
<feature type="chain" id="PRO_1000080048" description="Integration host factor subunit beta">
    <location>
        <begin position="1"/>
        <end position="98"/>
    </location>
</feature>
<dbReference type="EMBL" id="CP000926">
    <property type="protein sequence ID" value="ABY97272.1"/>
    <property type="molecule type" value="Genomic_DNA"/>
</dbReference>
<dbReference type="RefSeq" id="WP_003252675.1">
    <property type="nucleotide sequence ID" value="NC_010322.1"/>
</dbReference>
<dbReference type="SMR" id="B0KTY3"/>
<dbReference type="GeneID" id="78503690"/>
<dbReference type="KEGG" id="ppg:PputGB1_1365"/>
<dbReference type="eggNOG" id="COG0776">
    <property type="taxonomic scope" value="Bacteria"/>
</dbReference>
<dbReference type="HOGENOM" id="CLU_105066_2_0_6"/>
<dbReference type="Proteomes" id="UP000002157">
    <property type="component" value="Chromosome"/>
</dbReference>
<dbReference type="GO" id="GO:0005694">
    <property type="term" value="C:chromosome"/>
    <property type="evidence" value="ECO:0007669"/>
    <property type="project" value="InterPro"/>
</dbReference>
<dbReference type="GO" id="GO:0005829">
    <property type="term" value="C:cytosol"/>
    <property type="evidence" value="ECO:0007669"/>
    <property type="project" value="TreeGrafter"/>
</dbReference>
<dbReference type="GO" id="GO:0003677">
    <property type="term" value="F:DNA binding"/>
    <property type="evidence" value="ECO:0007669"/>
    <property type="project" value="UniProtKB-UniRule"/>
</dbReference>
<dbReference type="GO" id="GO:0030527">
    <property type="term" value="F:structural constituent of chromatin"/>
    <property type="evidence" value="ECO:0007669"/>
    <property type="project" value="InterPro"/>
</dbReference>
<dbReference type="GO" id="GO:0006310">
    <property type="term" value="P:DNA recombination"/>
    <property type="evidence" value="ECO:0007669"/>
    <property type="project" value="UniProtKB-UniRule"/>
</dbReference>
<dbReference type="GO" id="GO:0006355">
    <property type="term" value="P:regulation of DNA-templated transcription"/>
    <property type="evidence" value="ECO:0007669"/>
    <property type="project" value="UniProtKB-UniRule"/>
</dbReference>
<dbReference type="GO" id="GO:0006417">
    <property type="term" value="P:regulation of translation"/>
    <property type="evidence" value="ECO:0007669"/>
    <property type="project" value="UniProtKB-UniRule"/>
</dbReference>
<dbReference type="CDD" id="cd13836">
    <property type="entry name" value="IHF_B"/>
    <property type="match status" value="1"/>
</dbReference>
<dbReference type="FunFam" id="4.10.520.10:FF:000003">
    <property type="entry name" value="Integration host factor subunit beta"/>
    <property type="match status" value="1"/>
</dbReference>
<dbReference type="Gene3D" id="4.10.520.10">
    <property type="entry name" value="IHF-like DNA-binding proteins"/>
    <property type="match status" value="1"/>
</dbReference>
<dbReference type="HAMAP" id="MF_00381">
    <property type="entry name" value="IHF_beta"/>
    <property type="match status" value="1"/>
</dbReference>
<dbReference type="InterPro" id="IPR000119">
    <property type="entry name" value="Hist_DNA-bd"/>
</dbReference>
<dbReference type="InterPro" id="IPR020816">
    <property type="entry name" value="Histone-like_DNA-bd_CS"/>
</dbReference>
<dbReference type="InterPro" id="IPR010992">
    <property type="entry name" value="IHF-like_DNA-bd_dom_sf"/>
</dbReference>
<dbReference type="InterPro" id="IPR005685">
    <property type="entry name" value="IHF_beta"/>
</dbReference>
<dbReference type="NCBIfam" id="TIGR00988">
    <property type="entry name" value="hip"/>
    <property type="match status" value="1"/>
</dbReference>
<dbReference type="NCBIfam" id="NF001222">
    <property type="entry name" value="PRK00199.1"/>
    <property type="match status" value="1"/>
</dbReference>
<dbReference type="PANTHER" id="PTHR33175">
    <property type="entry name" value="DNA-BINDING PROTEIN HU"/>
    <property type="match status" value="1"/>
</dbReference>
<dbReference type="PANTHER" id="PTHR33175:SF5">
    <property type="entry name" value="INTEGRATION HOST FACTOR SUBUNIT BETA"/>
    <property type="match status" value="1"/>
</dbReference>
<dbReference type="Pfam" id="PF00216">
    <property type="entry name" value="Bac_DNA_binding"/>
    <property type="match status" value="1"/>
</dbReference>
<dbReference type="PRINTS" id="PR01727">
    <property type="entry name" value="DNABINDINGHU"/>
</dbReference>
<dbReference type="SMART" id="SM00411">
    <property type="entry name" value="BHL"/>
    <property type="match status" value="1"/>
</dbReference>
<dbReference type="SUPFAM" id="SSF47729">
    <property type="entry name" value="IHF-like DNA-binding proteins"/>
    <property type="match status" value="1"/>
</dbReference>
<dbReference type="PROSITE" id="PS00045">
    <property type="entry name" value="HISTONE_LIKE"/>
    <property type="match status" value="1"/>
</dbReference>
<accession>B0KTY3</accession>
<protein>
    <recommendedName>
        <fullName evidence="1">Integration host factor subunit beta</fullName>
        <shortName evidence="1">IHF-beta</shortName>
    </recommendedName>
</protein>